<evidence type="ECO:0000250" key="1">
    <source>
        <dbReference type="UniProtKB" id="P37295"/>
    </source>
</evidence>
<evidence type="ECO:0000255" key="2"/>
<evidence type="ECO:0000305" key="3"/>
<feature type="chain" id="PRO_0000409231" description="Bifunctional lycopene cyclase/phytoene synthase">
    <location>
        <begin position="1"/>
        <end position="594"/>
    </location>
</feature>
<feature type="transmembrane region" description="Helical" evidence="2">
    <location>
        <begin position="3"/>
        <end position="23"/>
    </location>
</feature>
<feature type="transmembrane region" description="Helical" evidence="2">
    <location>
        <begin position="35"/>
        <end position="55"/>
    </location>
</feature>
<feature type="transmembrane region" description="Helical" evidence="2">
    <location>
        <begin position="77"/>
        <end position="97"/>
    </location>
</feature>
<feature type="transmembrane region" description="Helical" evidence="2">
    <location>
        <begin position="130"/>
        <end position="150"/>
    </location>
</feature>
<feature type="transmembrane region" description="Helical" evidence="2">
    <location>
        <begin position="153"/>
        <end position="173"/>
    </location>
</feature>
<feature type="transmembrane region" description="Helical" evidence="2">
    <location>
        <begin position="176"/>
        <end position="196"/>
    </location>
</feature>
<feature type="transmembrane region" description="Helical" evidence="2">
    <location>
        <begin position="227"/>
        <end position="247"/>
    </location>
</feature>
<feature type="region of interest" description="Lycopene beta-cyclase" evidence="1">
    <location>
        <begin position="1"/>
        <end position="249"/>
    </location>
</feature>
<feature type="region of interest" description="Phytoene synthase" evidence="1">
    <location>
        <begin position="256"/>
        <end position="594"/>
    </location>
</feature>
<gene>
    <name type="ORF">MGYG_02096</name>
</gene>
<organism>
    <name type="scientific">Arthroderma gypseum (strain ATCC MYA-4604 / CBS 118893)</name>
    <name type="common">Microsporum gypseum</name>
    <dbReference type="NCBI Taxonomy" id="535722"/>
    <lineage>
        <taxon>Eukaryota</taxon>
        <taxon>Fungi</taxon>
        <taxon>Dikarya</taxon>
        <taxon>Ascomycota</taxon>
        <taxon>Pezizomycotina</taxon>
        <taxon>Eurotiomycetes</taxon>
        <taxon>Eurotiomycetidae</taxon>
        <taxon>Onygenales</taxon>
        <taxon>Arthrodermataceae</taxon>
        <taxon>Nannizzia</taxon>
    </lineage>
</organism>
<dbReference type="EC" id="5.5.1.19" evidence="1"/>
<dbReference type="EC" id="2.5.1.32" evidence="1"/>
<dbReference type="EMBL" id="DS989823">
    <property type="protein sequence ID" value="EFQ99083.1"/>
    <property type="molecule type" value="Genomic_DNA"/>
</dbReference>
<dbReference type="RefSeq" id="XP_003174566.1">
    <property type="nucleotide sequence ID" value="XM_003174518.1"/>
</dbReference>
<dbReference type="SMR" id="E4UPP6"/>
<dbReference type="STRING" id="535722.E4UPP6"/>
<dbReference type="GeneID" id="10029862"/>
<dbReference type="VEuPathDB" id="FungiDB:MGYG_02096"/>
<dbReference type="eggNOG" id="KOG1459">
    <property type="taxonomic scope" value="Eukaryota"/>
</dbReference>
<dbReference type="HOGENOM" id="CLU_012965_0_0_1"/>
<dbReference type="InParanoid" id="E4UPP6"/>
<dbReference type="OMA" id="WACPFLL"/>
<dbReference type="OrthoDB" id="6600518at2759"/>
<dbReference type="UniPathway" id="UPA00799">
    <property type="reaction ID" value="UER00773"/>
</dbReference>
<dbReference type="UniPathway" id="UPA00802"/>
<dbReference type="Proteomes" id="UP000002669">
    <property type="component" value="Unassembled WGS sequence"/>
</dbReference>
<dbReference type="GO" id="GO:0016020">
    <property type="term" value="C:membrane"/>
    <property type="evidence" value="ECO:0007669"/>
    <property type="project" value="UniProtKB-SubCell"/>
</dbReference>
<dbReference type="GO" id="GO:0004311">
    <property type="term" value="F:geranylgeranyl diphosphate synthase activity"/>
    <property type="evidence" value="ECO:0007669"/>
    <property type="project" value="InterPro"/>
</dbReference>
<dbReference type="GO" id="GO:0016872">
    <property type="term" value="F:intramolecular lyase activity"/>
    <property type="evidence" value="ECO:0007669"/>
    <property type="project" value="InterPro"/>
</dbReference>
<dbReference type="GO" id="GO:0045436">
    <property type="term" value="F:lycopene beta cyclase activity"/>
    <property type="evidence" value="ECO:0007669"/>
    <property type="project" value="RHEA"/>
</dbReference>
<dbReference type="GO" id="GO:0051996">
    <property type="term" value="F:squalene synthase [NAD(P)H] activity"/>
    <property type="evidence" value="ECO:0007669"/>
    <property type="project" value="InterPro"/>
</dbReference>
<dbReference type="GO" id="GO:0016117">
    <property type="term" value="P:carotenoid biosynthetic process"/>
    <property type="evidence" value="ECO:0007669"/>
    <property type="project" value="UniProtKB-KW"/>
</dbReference>
<dbReference type="CDD" id="cd00683">
    <property type="entry name" value="Trans_IPPS_HH"/>
    <property type="match status" value="1"/>
</dbReference>
<dbReference type="Gene3D" id="1.10.600.10">
    <property type="entry name" value="Farnesyl Diphosphate Synthase"/>
    <property type="match status" value="1"/>
</dbReference>
<dbReference type="InterPro" id="IPR008949">
    <property type="entry name" value="Isoprenoid_synthase_dom_sf"/>
</dbReference>
<dbReference type="InterPro" id="IPR017825">
    <property type="entry name" value="Lycopene_cyclase_dom"/>
</dbReference>
<dbReference type="InterPro" id="IPR002060">
    <property type="entry name" value="Squ/phyt_synthse"/>
</dbReference>
<dbReference type="InterPro" id="IPR019845">
    <property type="entry name" value="Squalene/phytoene_synthase_CS"/>
</dbReference>
<dbReference type="InterPro" id="IPR044843">
    <property type="entry name" value="Trans_IPPS_bact-type"/>
</dbReference>
<dbReference type="InterPro" id="IPR033904">
    <property type="entry name" value="Trans_IPPS_HH"/>
</dbReference>
<dbReference type="NCBIfam" id="TIGR03462">
    <property type="entry name" value="CarR_dom_SF"/>
    <property type="match status" value="2"/>
</dbReference>
<dbReference type="PANTHER" id="PTHR31480">
    <property type="entry name" value="BIFUNCTIONAL LYCOPENE CYCLASE/PHYTOENE SYNTHASE"/>
    <property type="match status" value="1"/>
</dbReference>
<dbReference type="Pfam" id="PF00494">
    <property type="entry name" value="SQS_PSY"/>
    <property type="match status" value="1"/>
</dbReference>
<dbReference type="SFLD" id="SFLDS00005">
    <property type="entry name" value="Isoprenoid_Synthase_Type_I"/>
    <property type="match status" value="1"/>
</dbReference>
<dbReference type="SFLD" id="SFLDG01212">
    <property type="entry name" value="Phytoene_synthase_like"/>
    <property type="match status" value="1"/>
</dbReference>
<dbReference type="SUPFAM" id="SSF48576">
    <property type="entry name" value="Terpenoid synthases"/>
    <property type="match status" value="1"/>
</dbReference>
<dbReference type="PROSITE" id="PS01045">
    <property type="entry name" value="SQUALEN_PHYTOEN_SYN_2"/>
    <property type="match status" value="1"/>
</dbReference>
<name>LCPS_ARTGP</name>
<sequence>MGLDYLMVHVKYNLPPALLLTILYKPFFTRLEVHKIVLLCTIAVVWTIPWDSYLIRTRIWSYPADSVLGQTLFQIPLEEVFFFIIQTYNTSLLYIIFNKRLVLPSYLSGPTKPLAQGLFGPITHRTQRDLGTLFFTGILILGISFIYIGGEYMYLGLILSWVSPILVMQWVLMYRFLLALPPASVWVPIALPTLYLWVVDTLALRRGTWVIESGTKVDIQLWEGLEIEEALFFLVTNVMVVFGIAAMHNAAALFEYKAFISTTAMGDTPSIYQLITLFLTSSRLYDTNVLQEMSQAVTLLKQKSQSMYLGSAMFEGQLRLDLIALYSFCRKADDLIDDAPDRETAKYWIEQCEKALELRFKLKETALDDTEAYQLLTKSIPQPLHAAAHLLPASRLPKEPLSCLLQGFEIDLKFDFEKGSFPIATEHDLEVYAYHVAGTVASLLLELVFRHHPVSISEAERLRVISAGEVMGRALQYTNIARDITRDAEIGRVYIPSSWLAEEGLTPSMVISHPRNSKLIPLRRRILEKADKCYCETQEAISKLPSNVQGPVRATVTAYMEIGQVIRENETKIWNGKLKVSRWRRFKRAWLAML</sequence>
<protein>
    <recommendedName>
        <fullName evidence="1">Bifunctional lycopene cyclase/phytoene synthase</fullName>
    </recommendedName>
    <domain>
        <recommendedName>
            <fullName evidence="1">Lycopene beta-cyclase</fullName>
            <ecNumber evidence="1">5.5.1.19</ecNumber>
        </recommendedName>
        <alternativeName>
            <fullName evidence="1">Lycopene cyclase</fullName>
        </alternativeName>
    </domain>
    <domain>
        <recommendedName>
            <fullName evidence="1">Phytoene synthase</fullName>
            <ecNumber evidence="1">2.5.1.32</ecNumber>
        </recommendedName>
    </domain>
</protein>
<comment type="function">
    <text evidence="1">Bifunctional enzyme that catalyzes the reactions from geranylgeranyl diphosphate to phytoene (phytoene synthase) and lycopene to beta-carotene via the intermediate gamma-carotene (lycopene cyclase).</text>
</comment>
<comment type="catalytic activity">
    <reaction evidence="1">
        <text>all-trans-lycopene = gamma-carotene</text>
        <dbReference type="Rhea" id="RHEA:32219"/>
        <dbReference type="ChEBI" id="CHEBI:15948"/>
        <dbReference type="ChEBI" id="CHEBI:27740"/>
        <dbReference type="EC" id="5.5.1.19"/>
    </reaction>
</comment>
<comment type="catalytic activity">
    <reaction evidence="1">
        <text>gamma-carotene = all-trans-beta-carotene</text>
        <dbReference type="Rhea" id="RHEA:32239"/>
        <dbReference type="ChEBI" id="CHEBI:17579"/>
        <dbReference type="ChEBI" id="CHEBI:27740"/>
        <dbReference type="EC" id="5.5.1.19"/>
    </reaction>
</comment>
<comment type="catalytic activity">
    <reaction evidence="1">
        <text>2 (2E,6E,10E)-geranylgeranyl diphosphate = 15-cis-phytoene + 2 diphosphate</text>
        <dbReference type="Rhea" id="RHEA:34475"/>
        <dbReference type="ChEBI" id="CHEBI:27787"/>
        <dbReference type="ChEBI" id="CHEBI:33019"/>
        <dbReference type="ChEBI" id="CHEBI:58756"/>
        <dbReference type="EC" id="2.5.1.32"/>
    </reaction>
</comment>
<comment type="pathway">
    <text>Carotenoid biosynthesis; beta-carotene biosynthesis.</text>
</comment>
<comment type="pathway">
    <text>Carotenoid biosynthesis; phytoene biosynthesis; all-trans-phytoene from geranylgeranyl diphosphate: step 1/1.</text>
</comment>
<comment type="subcellular location">
    <subcellularLocation>
        <location evidence="3">Membrane</location>
        <topology evidence="3">Multi-pass membrane protein</topology>
    </subcellularLocation>
</comment>
<comment type="similarity">
    <text evidence="3">In the N-terminal section; belongs to the lycopene beta-cyclase family.</text>
</comment>
<comment type="similarity">
    <text evidence="3">In the C-terminal section; belongs to the phytoene/squalene synthase family.</text>
</comment>
<proteinExistence type="inferred from homology"/>
<keyword id="KW-0125">Carotenoid biosynthesis</keyword>
<keyword id="KW-0413">Isomerase</keyword>
<keyword id="KW-0472">Membrane</keyword>
<keyword id="KW-0511">Multifunctional enzyme</keyword>
<keyword id="KW-1185">Reference proteome</keyword>
<keyword id="KW-0808">Transferase</keyword>
<keyword id="KW-0812">Transmembrane</keyword>
<keyword id="KW-1133">Transmembrane helix</keyword>
<accession>E4UPP6</accession>
<reference key="1">
    <citation type="journal article" date="2012" name="MBio">
        <title>Comparative genome analysis of Trichophyton rubrum and related dermatophytes reveals candidate genes involved in infection.</title>
        <authorList>
            <person name="Martinez D.A."/>
            <person name="Oliver B.G."/>
            <person name="Graeser Y."/>
            <person name="Goldberg J.M."/>
            <person name="Li W."/>
            <person name="Martinez-Rossi N.M."/>
            <person name="Monod M."/>
            <person name="Shelest E."/>
            <person name="Barton R.C."/>
            <person name="Birch E."/>
            <person name="Brakhage A.A."/>
            <person name="Chen Z."/>
            <person name="Gurr S.J."/>
            <person name="Heiman D."/>
            <person name="Heitman J."/>
            <person name="Kosti I."/>
            <person name="Rossi A."/>
            <person name="Saif S."/>
            <person name="Samalova M."/>
            <person name="Saunders C.W."/>
            <person name="Shea T."/>
            <person name="Summerbell R.C."/>
            <person name="Xu J."/>
            <person name="Young S."/>
            <person name="Zeng Q."/>
            <person name="Birren B.W."/>
            <person name="Cuomo C.A."/>
            <person name="White T.C."/>
        </authorList>
    </citation>
    <scope>NUCLEOTIDE SEQUENCE [LARGE SCALE GENOMIC DNA]</scope>
    <source>
        <strain>ATCC MYA-4604 / CBS 118893</strain>
    </source>
</reference>